<feature type="chain" id="PRO_0000449019" description="Atrochrysone carboxyl ACP thioesterase AgnL7">
    <location>
        <begin position="1"/>
        <end position="314"/>
    </location>
</feature>
<feature type="active site" description="Proton donor/acceptor" evidence="2">
    <location>
        <position position="107"/>
    </location>
</feature>
<feature type="binding site" evidence="1">
    <location>
        <position position="103"/>
    </location>
    <ligand>
        <name>Zn(2+)</name>
        <dbReference type="ChEBI" id="CHEBI:29105"/>
        <label>1</label>
        <note>catalytic</note>
    </ligand>
</feature>
<feature type="binding site" evidence="1">
    <location>
        <position position="105"/>
    </location>
    <ligand>
        <name>Zn(2+)</name>
        <dbReference type="ChEBI" id="CHEBI:29105"/>
        <label>1</label>
        <note>catalytic</note>
    </ligand>
</feature>
<feature type="binding site" evidence="1">
    <location>
        <position position="107"/>
    </location>
    <ligand>
        <name>Zn(2+)</name>
        <dbReference type="ChEBI" id="CHEBI:29105"/>
        <label>2</label>
        <note>catalytic</note>
    </ligand>
</feature>
<feature type="binding site" evidence="1">
    <location>
        <position position="108"/>
    </location>
    <ligand>
        <name>Zn(2+)</name>
        <dbReference type="ChEBI" id="CHEBI:29105"/>
        <label>2</label>
        <note>catalytic</note>
    </ligand>
</feature>
<organism>
    <name type="scientific">Paecilomyces divaricatus</name>
    <name type="common">Penicillium divaricatum</name>
    <dbReference type="NCBI Taxonomy" id="644132"/>
    <lineage>
        <taxon>Eukaryota</taxon>
        <taxon>Fungi</taxon>
        <taxon>Dikarya</taxon>
        <taxon>Ascomycota</taxon>
        <taxon>Pezizomycotina</taxon>
        <taxon>Eurotiomycetes</taxon>
        <taxon>Eurotiomycetidae</taxon>
        <taxon>Eurotiales</taxon>
        <taxon>Thermoascaceae</taxon>
        <taxon>Paecilomyces</taxon>
    </lineage>
</organism>
<gene>
    <name evidence="4" type="primary">AgnL7</name>
</gene>
<sequence>MGEGGYQQINKTLNACAFDDYLATQHARLPPLPDVEQISPRVVRVLGQNAGKFTLQGTNTYIVGTGSRRLIIDTAQGYRAWADLIESTLAQRSIRLSHVFLTHWHGDHTKGVPDLIRMDPDLAEGIYKNSPDHGQRPIEDGQVFRVEGATLRAVHAPGHSHDHMCFVLEEENALFTGDNVLGHGTSAVEDLGLYMTTLRKLQAQECAVGYPAHGAVIPNLPGKITNELAQKTRREKQCLVALDRIRNDQGRLASLTVSELIDVVHGTQLDEQVRKMALEPFMDEVLRKLAEDGHVAFRVRKGVKTWFALNTVRS</sequence>
<protein>
    <recommendedName>
        <fullName evidence="4">Atrochrysone carboxyl ACP thioesterase AgnL7</fullName>
        <shortName evidence="4">ACTE</shortName>
        <ecNumber evidence="6">3.1.2.-</ecNumber>
    </recommendedName>
    <alternativeName>
        <fullName evidence="4">Agnestins biosynthesis cluster protein L7</fullName>
    </alternativeName>
</protein>
<comment type="function">
    <text evidence="3">Atrochrysone carboxyl ACP thioesterase; part of the gene cluster that mediates the biosynthesis of agnestins, dihydroxy-xanthone metabolites (PubMed:30746079). The pathway begins with the assembly and cyclization of atrochrysone thioester by the non-reducing polyketide synthase Agnpks1 (PubMed:30746079). The atrochrysone carboxyl ACP thioesterase AgnL7 then breaks the thioester bond and releases the atrochrysone carboxylic acid as the first enzyme-free intermediate (PubMed:30746079). The decarboxylase AgnL1 then catalyzes the concerted decarboxylation-elimination required to convert atochrysone carboxylic acid into emodin anthrone, which is further oxidized to emodin by the anthrone oxygenase AgnL2 (PubMed:30746079). Emodin then undergoes reduction catalyzed by the oxidoreductase AgnL4 to yield the dihydroquinone tautomer which is the substrate for reduction by the short chain dehydrogenase AgnL6 reduction to produce hydroxyketone, followed by AgnL8 dehydration and likely spontaneous autoxidation to chrysophanol (PubMed:30746079). Baeyer-Villiger oxidation by the oxidase AgnL3 leads to monodictyphenone via cleavage of the C-10/C-10a bond of chrysophanol (PubMed:30746079). Alternative cleavage at the C-4a/C-10 bond of chrysophanol also leads to the formation some cephalone F (PubMed:30746079). Further conversion to agnestins A and B, requires reduction to dihydro-monodictyphenone, oxidation to agnestin C probably via an epoxide, and rearrangement to either agnestin A or agnestin B directly, although agnestin A or agnestin B can also interconvert (PubMed:30746079). Within the cluster, AgnR1 is the only unassigned oxidoreductase present which could be involved in this conversion. However, AgnR1 seems not to be involved in this step, and thus genes involved in the proposed oxidation/reduction may be located elsewhere on the genome (PubMed:30746079). Further agnestin A derivatives are probably formed by spontaneous decarboxylations, dehydrations and methanolysis reactions (PubMed:30746079).</text>
</comment>
<comment type="catalytic activity">
    <reaction evidence="6">
        <text>atrochrysone carboxyl-[ACP] + H2O = atrochrysone carboxylate + holo-[ACP] + H(+)</text>
        <dbReference type="Rhea" id="RHEA:64236"/>
        <dbReference type="Rhea" id="RHEA-COMP:9685"/>
        <dbReference type="Rhea" id="RHEA-COMP:16552"/>
        <dbReference type="ChEBI" id="CHEBI:15377"/>
        <dbReference type="ChEBI" id="CHEBI:15378"/>
        <dbReference type="ChEBI" id="CHEBI:64479"/>
        <dbReference type="ChEBI" id="CHEBI:149712"/>
        <dbReference type="ChEBI" id="CHEBI:149713"/>
    </reaction>
    <physiologicalReaction direction="left-to-right" evidence="6">
        <dbReference type="Rhea" id="RHEA:64237"/>
    </physiologicalReaction>
</comment>
<comment type="cofactor">
    <cofactor evidence="1">
        <name>Zn(2+)</name>
        <dbReference type="ChEBI" id="CHEBI:29105"/>
    </cofactor>
    <text evidence="1">Binds 2 Zn(2+) ions per subunit.</text>
</comment>
<comment type="pathway">
    <text evidence="6">Secondary metabolite biosynthesis.</text>
</comment>
<comment type="similarity">
    <text evidence="5">Belongs to the metallo-beta-lactamase superfamily.</text>
</comment>
<keyword id="KW-0378">Hydrolase</keyword>
<keyword id="KW-0479">Metal-binding</keyword>
<keyword id="KW-0862">Zinc</keyword>
<proteinExistence type="inferred from homology"/>
<accession>A0A411PQM3</accession>
<evidence type="ECO:0000250" key="1">
    <source>
        <dbReference type="UniProtKB" id="Q988B9"/>
    </source>
</evidence>
<evidence type="ECO:0000255" key="2"/>
<evidence type="ECO:0000269" key="3">
    <source>
    </source>
</evidence>
<evidence type="ECO:0000303" key="4">
    <source>
    </source>
</evidence>
<evidence type="ECO:0000305" key="5"/>
<evidence type="ECO:0000305" key="6">
    <source>
    </source>
</evidence>
<reference key="1">
    <citation type="journal article" date="2019" name="Chem. Sci.">
        <title>Characterisation of the biosynthetic pathway to agnestins A and B reveals the reductive route to chrysophanol in fungi.</title>
        <authorList>
            <person name="Szwalbe A.J."/>
            <person name="Williams K."/>
            <person name="Song Z."/>
            <person name="de Mattos-Shipley K."/>
            <person name="Vincent J.L."/>
            <person name="Bailey A.M."/>
            <person name="Willis C.L."/>
            <person name="Cox R.J."/>
            <person name="Simpson T.J."/>
        </authorList>
    </citation>
    <scope>NUCLEOTIDE SEQUENCE [GENOMIC DNA]</scope>
    <scope>FUNCTION</scope>
    <scope>PATHWAY</scope>
    <source>
        <strain>K5013</strain>
    </source>
</reference>
<name>AGN7_PAEDI</name>
<dbReference type="EC" id="3.1.2.-" evidence="6"/>
<dbReference type="EMBL" id="MH898872">
    <property type="protein sequence ID" value="QBG38881.1"/>
    <property type="molecule type" value="Genomic_DNA"/>
</dbReference>
<dbReference type="SMR" id="A0A411PQM3"/>
<dbReference type="GO" id="GO:0016787">
    <property type="term" value="F:hydrolase activity"/>
    <property type="evidence" value="ECO:0007669"/>
    <property type="project" value="UniProtKB-KW"/>
</dbReference>
<dbReference type="GO" id="GO:0046872">
    <property type="term" value="F:metal ion binding"/>
    <property type="evidence" value="ECO:0007669"/>
    <property type="project" value="UniProtKB-KW"/>
</dbReference>
<dbReference type="GO" id="GO:0044550">
    <property type="term" value="P:secondary metabolite biosynthetic process"/>
    <property type="evidence" value="ECO:0007669"/>
    <property type="project" value="TreeGrafter"/>
</dbReference>
<dbReference type="CDD" id="cd07722">
    <property type="entry name" value="LACTB2-like_MBL-fold"/>
    <property type="match status" value="1"/>
</dbReference>
<dbReference type="FunFam" id="3.60.15.10:FF:000041">
    <property type="entry name" value="Metallo-beta-lactamase domain protein"/>
    <property type="match status" value="1"/>
</dbReference>
<dbReference type="Gene3D" id="3.60.15.10">
    <property type="entry name" value="Ribonuclease Z/Hydroxyacylglutathione hydrolase-like"/>
    <property type="match status" value="1"/>
</dbReference>
<dbReference type="Gene3D" id="1.10.10.10">
    <property type="entry name" value="Winged helix-like DNA-binding domain superfamily/Winged helix DNA-binding domain"/>
    <property type="match status" value="1"/>
</dbReference>
<dbReference type="InterPro" id="IPR047921">
    <property type="entry name" value="LACTB2-like_MBL-fold"/>
</dbReference>
<dbReference type="InterPro" id="IPR001279">
    <property type="entry name" value="Metallo-B-lactamas"/>
</dbReference>
<dbReference type="InterPro" id="IPR036866">
    <property type="entry name" value="RibonucZ/Hydroxyglut_hydro"/>
</dbReference>
<dbReference type="InterPro" id="IPR050662">
    <property type="entry name" value="Sec-metab_biosynth-thioest"/>
</dbReference>
<dbReference type="InterPro" id="IPR036388">
    <property type="entry name" value="WH-like_DNA-bd_sf"/>
</dbReference>
<dbReference type="PANTHER" id="PTHR23131:SF3">
    <property type="entry name" value="ATROCHRYSONE CARBOXYL ACP THIOESTERASE"/>
    <property type="match status" value="1"/>
</dbReference>
<dbReference type="PANTHER" id="PTHR23131">
    <property type="entry name" value="ENDORIBONUCLEASE LACTB2"/>
    <property type="match status" value="1"/>
</dbReference>
<dbReference type="Pfam" id="PF00753">
    <property type="entry name" value="Lactamase_B"/>
    <property type="match status" value="2"/>
</dbReference>
<dbReference type="SMART" id="SM00849">
    <property type="entry name" value="Lactamase_B"/>
    <property type="match status" value="1"/>
</dbReference>
<dbReference type="SUPFAM" id="SSF56281">
    <property type="entry name" value="Metallo-hydrolase/oxidoreductase"/>
    <property type="match status" value="1"/>
</dbReference>